<protein>
    <recommendedName>
        <fullName>Zinc finger protein ZIC 4</fullName>
    </recommendedName>
    <alternativeName>
        <fullName>Zinc finger protein of the cerebellum 4</fullName>
    </alternativeName>
</protein>
<feature type="chain" id="PRO_0000047254" description="Zinc finger protein ZIC 4">
    <location>
        <begin position="1"/>
        <end position="341"/>
    </location>
</feature>
<feature type="zinc finger region" description="C2H2-type 1; atypical" evidence="1">
    <location>
        <begin position="135"/>
        <end position="169"/>
    </location>
</feature>
<feature type="zinc finger region" description="C2H2-type 2; atypical" evidence="1">
    <location>
        <begin position="178"/>
        <end position="205"/>
    </location>
</feature>
<feature type="zinc finger region" description="C2H2-type 3" evidence="1">
    <location>
        <begin position="211"/>
        <end position="235"/>
    </location>
</feature>
<feature type="zinc finger region" description="C2H2-type 4" evidence="1">
    <location>
        <begin position="241"/>
        <end position="265"/>
    </location>
</feature>
<feature type="zinc finger region" description="C2H2-type 5" evidence="1">
    <location>
        <begin position="271"/>
        <end position="295"/>
    </location>
</feature>
<feature type="region of interest" description="Disordered" evidence="2">
    <location>
        <begin position="36"/>
        <end position="66"/>
    </location>
</feature>
<feature type="region of interest" description="Disordered" evidence="2">
    <location>
        <begin position="289"/>
        <end position="309"/>
    </location>
</feature>
<comment type="function">
    <text evidence="3">Binds to DNA.</text>
</comment>
<comment type="subcellular location">
    <subcellularLocation>
        <location evidence="3">Nucleus</location>
    </subcellularLocation>
</comment>
<comment type="tissue specificity">
    <text evidence="5">Exclusively expressed in the cerebellum.</text>
</comment>
<comment type="developmental stage">
    <text evidence="4 5">First expressed in embryo at 9 dpc. Expressed in the dorsal midline of the forebrain at 10.5 dpc at the boundary between the diencephalon and telencephalon, the septum, and the lamina terminalis. Expressed in the choroid plexus of the third ventricle, the dorsal part of the spinal neural tube, the dorsal sclerotome and the dorsomedial lip of the dermomyotome between 10.5 and 12.5 dpc. Expressed in the midline of the forebrain and in the dorsal spinal neural tube at 12.5 dpc.</text>
</comment>
<comment type="similarity">
    <text evidence="6">Belongs to the GLI C2H2-type zinc-finger protein family.</text>
</comment>
<accession>Q61467</accession>
<accession>Q8BG91</accession>
<organism>
    <name type="scientific">Mus musculus</name>
    <name type="common">Mouse</name>
    <dbReference type="NCBI Taxonomy" id="10090"/>
    <lineage>
        <taxon>Eukaryota</taxon>
        <taxon>Metazoa</taxon>
        <taxon>Chordata</taxon>
        <taxon>Craniata</taxon>
        <taxon>Vertebrata</taxon>
        <taxon>Euteleostomi</taxon>
        <taxon>Mammalia</taxon>
        <taxon>Eutheria</taxon>
        <taxon>Euarchontoglires</taxon>
        <taxon>Glires</taxon>
        <taxon>Rodentia</taxon>
        <taxon>Myomorpha</taxon>
        <taxon>Muroidea</taxon>
        <taxon>Muridae</taxon>
        <taxon>Murinae</taxon>
        <taxon>Mus</taxon>
        <taxon>Mus</taxon>
    </lineage>
</organism>
<proteinExistence type="evidence at protein level"/>
<dbReference type="EMBL" id="D78174">
    <property type="protein sequence ID" value="BAA11240.1"/>
    <property type="status" value="ALT_TERM"/>
    <property type="molecule type" value="mRNA"/>
</dbReference>
<dbReference type="EMBL" id="AK028305">
    <property type="protein sequence ID" value="BAC25871.1"/>
    <property type="molecule type" value="mRNA"/>
</dbReference>
<dbReference type="EMBL" id="AK035908">
    <property type="protein sequence ID" value="BAC29239.1"/>
    <property type="molecule type" value="mRNA"/>
</dbReference>
<dbReference type="CCDS" id="CCDS90639.1"/>
<dbReference type="PIR" id="JC4875">
    <property type="entry name" value="JC4875"/>
</dbReference>
<dbReference type="RefSeq" id="NP_001361678.1">
    <property type="nucleotide sequence ID" value="NM_001374749.1"/>
</dbReference>
<dbReference type="RefSeq" id="NP_033602.2">
    <property type="nucleotide sequence ID" value="NM_009576.2"/>
</dbReference>
<dbReference type="RefSeq" id="XP_011241029.1">
    <property type="nucleotide sequence ID" value="XM_011242727.2"/>
</dbReference>
<dbReference type="SMR" id="Q61467"/>
<dbReference type="FunCoup" id="Q61467">
    <property type="interactions" value="879"/>
</dbReference>
<dbReference type="STRING" id="10090.ENSMUSP00000134053"/>
<dbReference type="iPTMnet" id="Q61467"/>
<dbReference type="PhosphoSitePlus" id="Q61467"/>
<dbReference type="PaxDb" id="10090-ENSMUSP00000134053"/>
<dbReference type="ProteomicsDB" id="275064"/>
<dbReference type="Antibodypedia" id="33535">
    <property type="antibodies" value="399 antibodies from 25 providers"/>
</dbReference>
<dbReference type="DNASU" id="22774"/>
<dbReference type="Ensembl" id="ENSMUST00000066384.7">
    <property type="protein sequence ID" value="ENSMUSP00000069568.6"/>
    <property type="gene ID" value="ENSMUSG00000036972.15"/>
</dbReference>
<dbReference type="GeneID" id="22774"/>
<dbReference type="KEGG" id="mmu:22774"/>
<dbReference type="UCSC" id="uc009rak.1">
    <property type="organism name" value="mouse"/>
</dbReference>
<dbReference type="AGR" id="MGI:107201"/>
<dbReference type="CTD" id="84107"/>
<dbReference type="MGI" id="MGI:107201">
    <property type="gene designation" value="Zic4"/>
</dbReference>
<dbReference type="VEuPathDB" id="HostDB:ENSMUSG00000036972"/>
<dbReference type="eggNOG" id="KOG1721">
    <property type="taxonomic scope" value="Eukaryota"/>
</dbReference>
<dbReference type="GeneTree" id="ENSGT00940000154200"/>
<dbReference type="InParanoid" id="Q61467"/>
<dbReference type="OrthoDB" id="3214149at2759"/>
<dbReference type="PhylomeDB" id="Q61467"/>
<dbReference type="BioGRID-ORCS" id="22774">
    <property type="hits" value="0 hits in 77 CRISPR screens"/>
</dbReference>
<dbReference type="ChiTaRS" id="Zic4">
    <property type="organism name" value="mouse"/>
</dbReference>
<dbReference type="PRO" id="PR:Q61467"/>
<dbReference type="Proteomes" id="UP000000589">
    <property type="component" value="Chromosome 9"/>
</dbReference>
<dbReference type="RNAct" id="Q61467">
    <property type="molecule type" value="protein"/>
</dbReference>
<dbReference type="Bgee" id="ENSMUSG00000036972">
    <property type="expression patterns" value="Expressed in embryonic brain and 92 other cell types or tissues"/>
</dbReference>
<dbReference type="ExpressionAtlas" id="Q61467">
    <property type="expression patterns" value="baseline and differential"/>
</dbReference>
<dbReference type="GO" id="GO:0005634">
    <property type="term" value="C:nucleus"/>
    <property type="evidence" value="ECO:0000314"/>
    <property type="project" value="UniProtKB"/>
</dbReference>
<dbReference type="GO" id="GO:0003677">
    <property type="term" value="F:DNA binding"/>
    <property type="evidence" value="ECO:0000314"/>
    <property type="project" value="UniProtKB"/>
</dbReference>
<dbReference type="GO" id="GO:0000977">
    <property type="term" value="F:RNA polymerase II transcription regulatory region sequence-specific DNA binding"/>
    <property type="evidence" value="ECO:0000314"/>
    <property type="project" value="MGI"/>
</dbReference>
<dbReference type="GO" id="GO:0008270">
    <property type="term" value="F:zinc ion binding"/>
    <property type="evidence" value="ECO:0007669"/>
    <property type="project" value="UniProtKB-KW"/>
</dbReference>
<dbReference type="GO" id="GO:0006357">
    <property type="term" value="P:regulation of transcription by RNA polymerase II"/>
    <property type="evidence" value="ECO:0007669"/>
    <property type="project" value="InterPro"/>
</dbReference>
<dbReference type="FunFam" id="3.30.160.60:FF:000035">
    <property type="entry name" value="Zinc finger protein ZIC 1"/>
    <property type="match status" value="1"/>
</dbReference>
<dbReference type="FunFam" id="3.30.160.60:FF:000039">
    <property type="entry name" value="Zinc finger protein ZIC 1"/>
    <property type="match status" value="1"/>
</dbReference>
<dbReference type="FunFam" id="3.30.160.60:FF:000041">
    <property type="entry name" value="Zinc finger protein ZIC 1"/>
    <property type="match status" value="1"/>
</dbReference>
<dbReference type="FunFam" id="3.30.160.60:FF:001330">
    <property type="entry name" value="Zinc finger protein ZIC 4"/>
    <property type="match status" value="1"/>
</dbReference>
<dbReference type="Gene3D" id="3.30.160.60">
    <property type="entry name" value="Classic Zinc Finger"/>
    <property type="match status" value="4"/>
</dbReference>
<dbReference type="InterPro" id="IPR043359">
    <property type="entry name" value="GLI-like"/>
</dbReference>
<dbReference type="InterPro" id="IPR056436">
    <property type="entry name" value="Znf-C2H2_ZIC1-5/GLI1-3-like"/>
</dbReference>
<dbReference type="InterPro" id="IPR036236">
    <property type="entry name" value="Znf_C2H2_sf"/>
</dbReference>
<dbReference type="InterPro" id="IPR013087">
    <property type="entry name" value="Znf_C2H2_type"/>
</dbReference>
<dbReference type="InterPro" id="IPR041643">
    <property type="entry name" value="Znf_ZIC"/>
</dbReference>
<dbReference type="PANTHER" id="PTHR45718:SF8">
    <property type="entry name" value="GLIS FAMILY ZINC FINGER 2"/>
    <property type="match status" value="1"/>
</dbReference>
<dbReference type="PANTHER" id="PTHR45718">
    <property type="entry name" value="TRANSCRIPTIONAL ACTIVATOR CUBITUS INTERRUPTUS"/>
    <property type="match status" value="1"/>
</dbReference>
<dbReference type="Pfam" id="PF00096">
    <property type="entry name" value="zf-C2H2"/>
    <property type="match status" value="2"/>
</dbReference>
<dbReference type="Pfam" id="PF23561">
    <property type="entry name" value="zf-C2H2_15"/>
    <property type="match status" value="1"/>
</dbReference>
<dbReference type="Pfam" id="PF18366">
    <property type="entry name" value="zf_ZIC"/>
    <property type="match status" value="1"/>
</dbReference>
<dbReference type="SMART" id="SM00355">
    <property type="entry name" value="ZnF_C2H2"/>
    <property type="match status" value="5"/>
</dbReference>
<dbReference type="SUPFAM" id="SSF57667">
    <property type="entry name" value="beta-beta-alpha zinc fingers"/>
    <property type="match status" value="2"/>
</dbReference>
<dbReference type="PROSITE" id="PS00028">
    <property type="entry name" value="ZINC_FINGER_C2H2_1"/>
    <property type="match status" value="3"/>
</dbReference>
<dbReference type="PROSITE" id="PS50157">
    <property type="entry name" value="ZINC_FINGER_C2H2_2"/>
    <property type="match status" value="4"/>
</dbReference>
<name>ZIC4_MOUSE</name>
<reference key="1">
    <citation type="journal article" date="1996" name="Gene">
        <title>Identification and characterization of Zic4, a new member of the mouse Zic gene family.</title>
        <authorList>
            <person name="Aruga J."/>
            <person name="Yozu A."/>
            <person name="Hayashizaki Y."/>
            <person name="Okazaki Y."/>
            <person name="Chapman V.M."/>
            <person name="Mikoshiba K."/>
        </authorList>
    </citation>
    <scope>NUCLEOTIDE SEQUENCE [MRNA]</scope>
    <scope>DEVELOPMENTAL STAGE</scope>
    <scope>TISSUE SPECIFICITY</scope>
    <source>
        <tissue>Cerebellum</tissue>
    </source>
</reference>
<reference key="2">
    <citation type="journal article" date="2005" name="Science">
        <title>The transcriptional landscape of the mammalian genome.</title>
        <authorList>
            <person name="Carninci P."/>
            <person name="Kasukawa T."/>
            <person name="Katayama S."/>
            <person name="Gough J."/>
            <person name="Frith M.C."/>
            <person name="Maeda N."/>
            <person name="Oyama R."/>
            <person name="Ravasi T."/>
            <person name="Lenhard B."/>
            <person name="Wells C."/>
            <person name="Kodzius R."/>
            <person name="Shimokawa K."/>
            <person name="Bajic V.B."/>
            <person name="Brenner S.E."/>
            <person name="Batalov S."/>
            <person name="Forrest A.R."/>
            <person name="Zavolan M."/>
            <person name="Davis M.J."/>
            <person name="Wilming L.G."/>
            <person name="Aidinis V."/>
            <person name="Allen J.E."/>
            <person name="Ambesi-Impiombato A."/>
            <person name="Apweiler R."/>
            <person name="Aturaliya R.N."/>
            <person name="Bailey T.L."/>
            <person name="Bansal M."/>
            <person name="Baxter L."/>
            <person name="Beisel K.W."/>
            <person name="Bersano T."/>
            <person name="Bono H."/>
            <person name="Chalk A.M."/>
            <person name="Chiu K.P."/>
            <person name="Choudhary V."/>
            <person name="Christoffels A."/>
            <person name="Clutterbuck D.R."/>
            <person name="Crowe M.L."/>
            <person name="Dalla E."/>
            <person name="Dalrymple B.P."/>
            <person name="de Bono B."/>
            <person name="Della Gatta G."/>
            <person name="di Bernardo D."/>
            <person name="Down T."/>
            <person name="Engstrom P."/>
            <person name="Fagiolini M."/>
            <person name="Faulkner G."/>
            <person name="Fletcher C.F."/>
            <person name="Fukushima T."/>
            <person name="Furuno M."/>
            <person name="Futaki S."/>
            <person name="Gariboldi M."/>
            <person name="Georgii-Hemming P."/>
            <person name="Gingeras T.R."/>
            <person name="Gojobori T."/>
            <person name="Green R.E."/>
            <person name="Gustincich S."/>
            <person name="Harbers M."/>
            <person name="Hayashi Y."/>
            <person name="Hensch T.K."/>
            <person name="Hirokawa N."/>
            <person name="Hill D."/>
            <person name="Huminiecki L."/>
            <person name="Iacono M."/>
            <person name="Ikeo K."/>
            <person name="Iwama A."/>
            <person name="Ishikawa T."/>
            <person name="Jakt M."/>
            <person name="Kanapin A."/>
            <person name="Katoh M."/>
            <person name="Kawasawa Y."/>
            <person name="Kelso J."/>
            <person name="Kitamura H."/>
            <person name="Kitano H."/>
            <person name="Kollias G."/>
            <person name="Krishnan S.P."/>
            <person name="Kruger A."/>
            <person name="Kummerfeld S.K."/>
            <person name="Kurochkin I.V."/>
            <person name="Lareau L.F."/>
            <person name="Lazarevic D."/>
            <person name="Lipovich L."/>
            <person name="Liu J."/>
            <person name="Liuni S."/>
            <person name="McWilliam S."/>
            <person name="Madan Babu M."/>
            <person name="Madera M."/>
            <person name="Marchionni L."/>
            <person name="Matsuda H."/>
            <person name="Matsuzawa S."/>
            <person name="Miki H."/>
            <person name="Mignone F."/>
            <person name="Miyake S."/>
            <person name="Morris K."/>
            <person name="Mottagui-Tabar S."/>
            <person name="Mulder N."/>
            <person name="Nakano N."/>
            <person name="Nakauchi H."/>
            <person name="Ng P."/>
            <person name="Nilsson R."/>
            <person name="Nishiguchi S."/>
            <person name="Nishikawa S."/>
            <person name="Nori F."/>
            <person name="Ohara O."/>
            <person name="Okazaki Y."/>
            <person name="Orlando V."/>
            <person name="Pang K.C."/>
            <person name="Pavan W.J."/>
            <person name="Pavesi G."/>
            <person name="Pesole G."/>
            <person name="Petrovsky N."/>
            <person name="Piazza S."/>
            <person name="Reed J."/>
            <person name="Reid J.F."/>
            <person name="Ring B.Z."/>
            <person name="Ringwald M."/>
            <person name="Rost B."/>
            <person name="Ruan Y."/>
            <person name="Salzberg S.L."/>
            <person name="Sandelin A."/>
            <person name="Schneider C."/>
            <person name="Schoenbach C."/>
            <person name="Sekiguchi K."/>
            <person name="Semple C.A."/>
            <person name="Seno S."/>
            <person name="Sessa L."/>
            <person name="Sheng Y."/>
            <person name="Shibata Y."/>
            <person name="Shimada H."/>
            <person name="Shimada K."/>
            <person name="Silva D."/>
            <person name="Sinclair B."/>
            <person name="Sperling S."/>
            <person name="Stupka E."/>
            <person name="Sugiura K."/>
            <person name="Sultana R."/>
            <person name="Takenaka Y."/>
            <person name="Taki K."/>
            <person name="Tammoja K."/>
            <person name="Tan S.L."/>
            <person name="Tang S."/>
            <person name="Taylor M.S."/>
            <person name="Tegner J."/>
            <person name="Teichmann S.A."/>
            <person name="Ueda H.R."/>
            <person name="van Nimwegen E."/>
            <person name="Verardo R."/>
            <person name="Wei C.L."/>
            <person name="Yagi K."/>
            <person name="Yamanishi H."/>
            <person name="Zabarovsky E."/>
            <person name="Zhu S."/>
            <person name="Zimmer A."/>
            <person name="Hide W."/>
            <person name="Bult C."/>
            <person name="Grimmond S.M."/>
            <person name="Teasdale R.D."/>
            <person name="Liu E.T."/>
            <person name="Brusic V."/>
            <person name="Quackenbush J."/>
            <person name="Wahlestedt C."/>
            <person name="Mattick J.S."/>
            <person name="Hume D.A."/>
            <person name="Kai C."/>
            <person name="Sasaki D."/>
            <person name="Tomaru Y."/>
            <person name="Fukuda S."/>
            <person name="Kanamori-Katayama M."/>
            <person name="Suzuki M."/>
            <person name="Aoki J."/>
            <person name="Arakawa T."/>
            <person name="Iida J."/>
            <person name="Imamura K."/>
            <person name="Itoh M."/>
            <person name="Kato T."/>
            <person name="Kawaji H."/>
            <person name="Kawagashira N."/>
            <person name="Kawashima T."/>
            <person name="Kojima M."/>
            <person name="Kondo S."/>
            <person name="Konno H."/>
            <person name="Nakano K."/>
            <person name="Ninomiya N."/>
            <person name="Nishio T."/>
            <person name="Okada M."/>
            <person name="Plessy C."/>
            <person name="Shibata K."/>
            <person name="Shiraki T."/>
            <person name="Suzuki S."/>
            <person name="Tagami M."/>
            <person name="Waki K."/>
            <person name="Watahiki A."/>
            <person name="Okamura-Oho Y."/>
            <person name="Suzuki H."/>
            <person name="Kawai J."/>
            <person name="Hayashizaki Y."/>
        </authorList>
    </citation>
    <scope>NUCLEOTIDE SEQUENCE [LARGE SCALE MRNA]</scope>
</reference>
<reference key="3">
    <citation type="journal article" date="2004" name="Biochem. Biophys. Res. Commun.">
        <title>Molecular properties of Zic4 and Zic5 proteins: functional diversity within Zic family.</title>
        <authorList>
            <person name="Ishiguro A."/>
            <person name="Inoue T."/>
            <person name="Mikoshiba K."/>
            <person name="Aruga J."/>
        </authorList>
    </citation>
    <scope>FUNCTION</scope>
    <scope>DNA-BINDING</scope>
    <scope>SUBCELLULAR LOCATION</scope>
</reference>
<reference key="4">
    <citation type="journal article" date="2005" name="Dev. Dyn.">
        <title>Zic4, a zinc-finger transcription factor, is expressed in the developing mouse nervous system.</title>
        <authorList>
            <person name="Gaston-Massuet C."/>
            <person name="Henderson D.J."/>
            <person name="Greene N.D."/>
            <person name="Copp A.J."/>
        </authorList>
    </citation>
    <scope>DEVELOPMENTAL STAGE</scope>
</reference>
<sequence length="341" mass="37437">MRLGRVCPRGPGKVRSPRHRFSCTLFVSTTGSSCGHHGPQLAASSNPSVLPGLHEQPPQASHSRPLNGLLRLGIPGDMYARSEPFAPGPMARSDTLATATALHGYGGMNLTMNLTAPHGPGAFFRYMRQPIKQELICKWLGDDSPMSPRPCSKTFSTMHELVTHVTVEHVGGPEQANHICFWEECPRQGKPFKAKYKLVNHIRVHTGEKPFPCPFPGCGKVFARSENLKIHKRTHTGEKPFRCEFEGCERRFANSSDRKKHSHVHTSDKPYMCKVRGCDKCYTHPSSLRKHMKVHGRSPPPSSGYDSAITSALASPSLESGREPSVACSAAVVVRGTDVSE</sequence>
<keyword id="KW-0238">DNA-binding</keyword>
<keyword id="KW-0479">Metal-binding</keyword>
<keyword id="KW-0539">Nucleus</keyword>
<keyword id="KW-1185">Reference proteome</keyword>
<keyword id="KW-0677">Repeat</keyword>
<keyword id="KW-0862">Zinc</keyword>
<keyword id="KW-0863">Zinc-finger</keyword>
<gene>
    <name type="primary">Zic4</name>
</gene>
<evidence type="ECO:0000255" key="1">
    <source>
        <dbReference type="PROSITE-ProRule" id="PRU00042"/>
    </source>
</evidence>
<evidence type="ECO:0000256" key="2">
    <source>
        <dbReference type="SAM" id="MobiDB-lite"/>
    </source>
</evidence>
<evidence type="ECO:0000269" key="3">
    <source>
    </source>
</evidence>
<evidence type="ECO:0000269" key="4">
    <source>
    </source>
</evidence>
<evidence type="ECO:0000269" key="5">
    <source>
    </source>
</evidence>
<evidence type="ECO:0000305" key="6"/>